<proteinExistence type="predicted"/>
<feature type="chain" id="PRO_0000283426" description="Putative F-box protein At3g17620">
    <location>
        <begin position="1"/>
        <end position="398"/>
    </location>
</feature>
<feature type="domain" description="F-box" evidence="1">
    <location>
        <begin position="1"/>
        <end position="45"/>
    </location>
</feature>
<keyword id="KW-1185">Reference proteome</keyword>
<protein>
    <recommendedName>
        <fullName>Putative F-box protein At3g17620</fullName>
    </recommendedName>
</protein>
<reference key="1">
    <citation type="journal article" date="2000" name="DNA Res.">
        <title>Structural analysis of Arabidopsis thaliana chromosome 3. I. Sequence features of the regions of 4,504,864 bp covered by sixty P1 and TAC clones.</title>
        <authorList>
            <person name="Sato S."/>
            <person name="Nakamura Y."/>
            <person name="Kaneko T."/>
            <person name="Katoh T."/>
            <person name="Asamizu E."/>
            <person name="Tabata S."/>
        </authorList>
    </citation>
    <scope>NUCLEOTIDE SEQUENCE [LARGE SCALE GENOMIC DNA]</scope>
    <source>
        <strain>cv. Columbia</strain>
    </source>
</reference>
<reference key="2">
    <citation type="journal article" date="2017" name="Plant J.">
        <title>Araport11: a complete reannotation of the Arabidopsis thaliana reference genome.</title>
        <authorList>
            <person name="Cheng C.Y."/>
            <person name="Krishnakumar V."/>
            <person name="Chan A.P."/>
            <person name="Thibaud-Nissen F."/>
            <person name="Schobel S."/>
            <person name="Town C.D."/>
        </authorList>
    </citation>
    <scope>GENOME REANNOTATION</scope>
    <source>
        <strain>cv. Columbia</strain>
    </source>
</reference>
<evidence type="ECO:0000255" key="1">
    <source>
        <dbReference type="PROSITE-ProRule" id="PRU00080"/>
    </source>
</evidence>
<name>FB156_ARATH</name>
<gene>
    <name type="ordered locus">At3g17620</name>
    <name type="ORF">MKP6.18</name>
</gene>
<sequence>MMSDLPRDLLEERLSRVPVKSLREARFTCKNWKTLSKKRSFTKKHLAQEATSRESEFKVVMVLHCKVYLTSINLRGIHNGFDPSINRQAKLVSLNGTDQIDISEVYHCDGLLLCISKDYTRVVVWNPYRSQTLWLKPSSPDHRMDWYICAIGYEKRKSSLRYKVLRFVDFAEEEFVEYEIYELKSNSWRVLDVTSDWEVEFYARGVSLKGNTYWFATDKFPEISSNLIHSVYFLLCFNFTSERFGPRLHLPCYPMDVDTVSLSSVREEQLAVLFQRKDNLHMEIWVTTKIEPEEVMWSKLFLAVDMQPLTDFKFGIADASFIIDEEKKVVVVFAKDKDVMYPTHNTAYIIGEDGYYKEVDLGKTTDKIRDPLVCSYVPSSAQIKQGGKRKKKGKLITD</sequence>
<accession>Q9LUN5</accession>
<organism>
    <name type="scientific">Arabidopsis thaliana</name>
    <name type="common">Mouse-ear cress</name>
    <dbReference type="NCBI Taxonomy" id="3702"/>
    <lineage>
        <taxon>Eukaryota</taxon>
        <taxon>Viridiplantae</taxon>
        <taxon>Streptophyta</taxon>
        <taxon>Embryophyta</taxon>
        <taxon>Tracheophyta</taxon>
        <taxon>Spermatophyta</taxon>
        <taxon>Magnoliopsida</taxon>
        <taxon>eudicotyledons</taxon>
        <taxon>Gunneridae</taxon>
        <taxon>Pentapetalae</taxon>
        <taxon>rosids</taxon>
        <taxon>malvids</taxon>
        <taxon>Brassicales</taxon>
        <taxon>Brassicaceae</taxon>
        <taxon>Camelineae</taxon>
        <taxon>Arabidopsis</taxon>
    </lineage>
</organism>
<dbReference type="EMBL" id="AB022219">
    <property type="protein sequence ID" value="BAB02052.1"/>
    <property type="molecule type" value="Genomic_DNA"/>
</dbReference>
<dbReference type="EMBL" id="CP002686">
    <property type="protein sequence ID" value="AEE75981.1"/>
    <property type="molecule type" value="Genomic_DNA"/>
</dbReference>
<dbReference type="RefSeq" id="NP_188389.1">
    <property type="nucleotide sequence ID" value="NM_112643.1"/>
</dbReference>
<dbReference type="BioGRID" id="6362">
    <property type="interactions" value="22"/>
</dbReference>
<dbReference type="FunCoup" id="Q9LUN5">
    <property type="interactions" value="5"/>
</dbReference>
<dbReference type="IntAct" id="Q9LUN5">
    <property type="interactions" value="22"/>
</dbReference>
<dbReference type="STRING" id="3702.Q9LUN5"/>
<dbReference type="PaxDb" id="3702-AT3G17620.1"/>
<dbReference type="EnsemblPlants" id="AT3G17620.1">
    <property type="protein sequence ID" value="AT3G17620.1"/>
    <property type="gene ID" value="AT3G17620"/>
</dbReference>
<dbReference type="GeneID" id="821029"/>
<dbReference type="Gramene" id="AT3G17620.1">
    <property type="protein sequence ID" value="AT3G17620.1"/>
    <property type="gene ID" value="AT3G17620"/>
</dbReference>
<dbReference type="KEGG" id="ath:AT3G17620"/>
<dbReference type="Araport" id="AT3G17620"/>
<dbReference type="TAIR" id="AT3G17620"/>
<dbReference type="HOGENOM" id="CLU_034692_0_0_1"/>
<dbReference type="InParanoid" id="Q9LUN5"/>
<dbReference type="OMA" id="FNFTSER"/>
<dbReference type="PhylomeDB" id="Q9LUN5"/>
<dbReference type="PRO" id="PR:Q9LUN5"/>
<dbReference type="Proteomes" id="UP000006548">
    <property type="component" value="Chromosome 3"/>
</dbReference>
<dbReference type="ExpressionAtlas" id="Q9LUN5">
    <property type="expression patterns" value="differential"/>
</dbReference>
<dbReference type="Gene3D" id="1.20.1280.50">
    <property type="match status" value="1"/>
</dbReference>
<dbReference type="InterPro" id="IPR006527">
    <property type="entry name" value="F-box-assoc_dom_typ1"/>
</dbReference>
<dbReference type="InterPro" id="IPR017451">
    <property type="entry name" value="F-box-assoc_interact_dom"/>
</dbReference>
<dbReference type="InterPro" id="IPR036047">
    <property type="entry name" value="F-box-like_dom_sf"/>
</dbReference>
<dbReference type="InterPro" id="IPR001810">
    <property type="entry name" value="F-box_dom"/>
</dbReference>
<dbReference type="InterPro" id="IPR050796">
    <property type="entry name" value="SCF_F-box_component"/>
</dbReference>
<dbReference type="NCBIfam" id="TIGR01640">
    <property type="entry name" value="F_box_assoc_1"/>
    <property type="match status" value="1"/>
</dbReference>
<dbReference type="PANTHER" id="PTHR31672">
    <property type="entry name" value="BNACNNG10540D PROTEIN"/>
    <property type="match status" value="1"/>
</dbReference>
<dbReference type="PANTHER" id="PTHR31672:SF13">
    <property type="entry name" value="F-BOX PROTEIN CPR30-LIKE"/>
    <property type="match status" value="1"/>
</dbReference>
<dbReference type="Pfam" id="PF00646">
    <property type="entry name" value="F-box"/>
    <property type="match status" value="1"/>
</dbReference>
<dbReference type="Pfam" id="PF07734">
    <property type="entry name" value="FBA_1"/>
    <property type="match status" value="1"/>
</dbReference>
<dbReference type="SMART" id="SM00256">
    <property type="entry name" value="FBOX"/>
    <property type="match status" value="1"/>
</dbReference>
<dbReference type="SUPFAM" id="SSF81383">
    <property type="entry name" value="F-box domain"/>
    <property type="match status" value="1"/>
</dbReference>
<dbReference type="PROSITE" id="PS50181">
    <property type="entry name" value="FBOX"/>
    <property type="match status" value="1"/>
</dbReference>